<keyword id="KW-0903">Direct protein sequencing</keyword>
<keyword id="KW-1015">Disulfide bond</keyword>
<keyword id="KW-0872">Ion channel impairing toxin</keyword>
<keyword id="KW-0528">Neurotoxin</keyword>
<keyword id="KW-0629">Postsynaptic neurotoxin</keyword>
<keyword id="KW-0964">Secreted</keyword>
<keyword id="KW-0800">Toxin</keyword>
<reference key="1">
    <citation type="journal article" date="1992" name="Toxicon">
        <title>Molecular properties and structure-function relationships of lethal peptides from venom of Wagler's pit viper, Trimeresurus wagleri.</title>
        <authorList>
            <person name="Schmidt J.J."/>
            <person name="Weinstein S.A."/>
            <person name="Smith L.A."/>
        </authorList>
    </citation>
    <scope>PROTEIN SEQUENCE (WAGLERIN-4)</scope>
    <scope>SYNTHESIS OF 3-24 (WAGLERIN-2)</scope>
    <source>
        <tissue>Venom</tissue>
    </source>
</reference>
<reference key="2">
    <citation type="journal article" date="1991" name="Toxicon">
        <title>Characterization and amino acid sequences of two lethal peptides isolated from venom of Wagler's pit viper, Trimeresurus wagleri.</title>
        <authorList>
            <person name="Weinstein S.A."/>
            <person name="Schmidt J.J."/>
            <person name="Bernheimer A.W."/>
            <person name="Smith L.A."/>
        </authorList>
    </citation>
    <scope>PROTEIN SEQUENCE OF 3-24 (WAGLERIN-2)</scope>
    <scope>TOXIC DOSE</scope>
    <source>
        <tissue>Venom</tissue>
    </source>
</reference>
<organism>
    <name type="scientific">Tropidolaemus wagleri</name>
    <name type="common">Wagler's pit viper</name>
    <name type="synonym">Trimeresurus wagleri</name>
    <dbReference type="NCBI Taxonomy" id="8770"/>
    <lineage>
        <taxon>Eukaryota</taxon>
        <taxon>Metazoa</taxon>
        <taxon>Chordata</taxon>
        <taxon>Craniata</taxon>
        <taxon>Vertebrata</taxon>
        <taxon>Euteleostomi</taxon>
        <taxon>Lepidosauria</taxon>
        <taxon>Squamata</taxon>
        <taxon>Bifurcata</taxon>
        <taxon>Unidentata</taxon>
        <taxon>Episquamata</taxon>
        <taxon>Toxicofera</taxon>
        <taxon>Serpentes</taxon>
        <taxon>Colubroidea</taxon>
        <taxon>Viperidae</taxon>
        <taxon>Crotalinae</taxon>
        <taxon>Tropidolaemus</taxon>
    </lineage>
</organism>
<dbReference type="PIR" id="A44008">
    <property type="entry name" value="A44008"/>
</dbReference>
<dbReference type="GO" id="GO:0005576">
    <property type="term" value="C:extracellular region"/>
    <property type="evidence" value="ECO:0007669"/>
    <property type="project" value="UniProtKB-SubCell"/>
</dbReference>
<dbReference type="GO" id="GO:0030550">
    <property type="term" value="F:acetylcholine receptor inhibitor activity"/>
    <property type="evidence" value="ECO:0007669"/>
    <property type="project" value="InterPro"/>
</dbReference>
<dbReference type="GO" id="GO:0099106">
    <property type="term" value="F:ion channel regulator activity"/>
    <property type="evidence" value="ECO:0007669"/>
    <property type="project" value="UniProtKB-KW"/>
</dbReference>
<dbReference type="GO" id="GO:0090729">
    <property type="term" value="F:toxin activity"/>
    <property type="evidence" value="ECO:0007669"/>
    <property type="project" value="UniProtKB-KW"/>
</dbReference>
<dbReference type="InterPro" id="IPR012637">
    <property type="entry name" value="Toxin_33"/>
</dbReference>
<dbReference type="Pfam" id="PF08121">
    <property type="entry name" value="Toxin_33"/>
    <property type="match status" value="1"/>
</dbReference>
<accession>P58930</accession>
<proteinExistence type="evidence at protein level"/>
<protein>
    <recommendedName>
        <fullName>Waglerin-4</fullName>
    </recommendedName>
    <alternativeName>
        <fullName>SL-Waglerin-2</fullName>
    </alternativeName>
    <component>
        <recommendedName>
            <fullName>Waglerin-2</fullName>
        </recommendedName>
        <alternativeName>
            <fullName>Lethal peptide II</fullName>
        </alternativeName>
        <alternativeName>
            <fullName>Waglerin II</fullName>
        </alternativeName>
    </component>
</protein>
<feature type="peptide" id="PRO_0000404086" description="Waglerin-4">
    <location>
        <begin position="1"/>
        <end position="24"/>
    </location>
</feature>
<feature type="peptide" id="PRO_0000044550" description="Waglerin-2">
    <location>
        <begin position="3"/>
        <end position="24"/>
    </location>
</feature>
<feature type="disulfide bond" evidence="1">
    <location>
        <begin position="11"/>
        <end position="15"/>
    </location>
</feature>
<evidence type="ECO:0000250" key="1"/>
<evidence type="ECO:0000269" key="2">
    <source>
    </source>
</evidence>
<evidence type="ECO:0000305" key="3"/>
<sequence>SLGGKPDLRPCYPPCHYIPRPKPR</sequence>
<comment type="function">
    <text evidence="1">Waglerin-2 selectively blocks the epsilon subunit of muscle nicotinic acetylcholine receptor (nAChR). Also has effects on rodent ionotropic GABA(A) receptors (GABR), since it potentiates I(GABA) in some neurons and depresses I(GABA) in others. In mice, it elicits tachypnea, ocular proptosis, rapid collapse and spasms, whereas no toxic effects on respiration and blood pressure are observed in rats (By similarity).</text>
</comment>
<comment type="function">
    <text evidence="1">Waglerin-4 selectively blocks the epsilon subunit of muscle nicotinic acetylcholine receptor. It elicits tachypnea, ocular proptosis, rapid collapse and spasms in mice. It causes death by respiratory failure (By similarity).</text>
</comment>
<comment type="subunit">
    <text evidence="1">Monomer.</text>
</comment>
<comment type="subcellular location">
    <subcellularLocation>
        <location>Secreted</location>
    </subcellularLocation>
</comment>
<comment type="tissue specificity">
    <text>Expressed by the venom gland.</text>
</comment>
<comment type="toxic dose">
    <text evidence="2">LD(50) is 0.51-0.583 mg/kg by intraperitoneal injection into mice.</text>
</comment>
<comment type="toxic dose">
    <text evidence="2">LD(50) of waglerin-2 is 0.51 mg/kg by intraperitoneal injection into mice.</text>
</comment>
<comment type="similarity">
    <text evidence="3">Belongs to the waglerin family.</text>
</comment>
<name>WAG24_TROWA</name>